<protein>
    <recommendedName>
        <fullName evidence="1">Glutamate--tRNA ligase</fullName>
        <ecNumber evidence="1">6.1.1.17</ecNumber>
    </recommendedName>
    <alternativeName>
        <fullName evidence="1">Glutamyl-tRNA synthetase</fullName>
        <shortName evidence="1">GluRS</shortName>
    </alternativeName>
</protein>
<dbReference type="EC" id="6.1.1.17" evidence="1"/>
<dbReference type="EMBL" id="CP000411">
    <property type="protein sequence ID" value="ABJ56297.1"/>
    <property type="molecule type" value="Genomic_DNA"/>
</dbReference>
<dbReference type="RefSeq" id="WP_011677418.1">
    <property type="nucleotide sequence ID" value="NC_008528.1"/>
</dbReference>
<dbReference type="SMR" id="Q04GX5"/>
<dbReference type="STRING" id="203123.OEOE_0321"/>
<dbReference type="KEGG" id="ooe:OEOE_0321"/>
<dbReference type="PATRIC" id="fig|203123.7.peg.333"/>
<dbReference type="eggNOG" id="COG0008">
    <property type="taxonomic scope" value="Bacteria"/>
</dbReference>
<dbReference type="HOGENOM" id="CLU_015768_6_1_9"/>
<dbReference type="Proteomes" id="UP000000774">
    <property type="component" value="Chromosome"/>
</dbReference>
<dbReference type="GO" id="GO:0005829">
    <property type="term" value="C:cytosol"/>
    <property type="evidence" value="ECO:0007669"/>
    <property type="project" value="TreeGrafter"/>
</dbReference>
<dbReference type="GO" id="GO:0005524">
    <property type="term" value="F:ATP binding"/>
    <property type="evidence" value="ECO:0007669"/>
    <property type="project" value="UniProtKB-UniRule"/>
</dbReference>
<dbReference type="GO" id="GO:0004818">
    <property type="term" value="F:glutamate-tRNA ligase activity"/>
    <property type="evidence" value="ECO:0007669"/>
    <property type="project" value="UniProtKB-UniRule"/>
</dbReference>
<dbReference type="GO" id="GO:0000049">
    <property type="term" value="F:tRNA binding"/>
    <property type="evidence" value="ECO:0007669"/>
    <property type="project" value="InterPro"/>
</dbReference>
<dbReference type="GO" id="GO:0008270">
    <property type="term" value="F:zinc ion binding"/>
    <property type="evidence" value="ECO:0007669"/>
    <property type="project" value="InterPro"/>
</dbReference>
<dbReference type="GO" id="GO:0006424">
    <property type="term" value="P:glutamyl-tRNA aminoacylation"/>
    <property type="evidence" value="ECO:0007669"/>
    <property type="project" value="UniProtKB-UniRule"/>
</dbReference>
<dbReference type="CDD" id="cd00808">
    <property type="entry name" value="GluRS_core"/>
    <property type="match status" value="1"/>
</dbReference>
<dbReference type="FunFam" id="3.40.50.620:FF:000007">
    <property type="entry name" value="Glutamate--tRNA ligase"/>
    <property type="match status" value="1"/>
</dbReference>
<dbReference type="Gene3D" id="1.10.10.350">
    <property type="match status" value="1"/>
</dbReference>
<dbReference type="Gene3D" id="3.40.50.620">
    <property type="entry name" value="HUPs"/>
    <property type="match status" value="1"/>
</dbReference>
<dbReference type="HAMAP" id="MF_00022">
    <property type="entry name" value="Glu_tRNA_synth_type1"/>
    <property type="match status" value="1"/>
</dbReference>
<dbReference type="InterPro" id="IPR045462">
    <property type="entry name" value="aa-tRNA-synth_I_cd-bd"/>
</dbReference>
<dbReference type="InterPro" id="IPR020751">
    <property type="entry name" value="aa-tRNA-synth_I_codon-bd_sub2"/>
</dbReference>
<dbReference type="InterPro" id="IPR001412">
    <property type="entry name" value="aa-tRNA-synth_I_CS"/>
</dbReference>
<dbReference type="InterPro" id="IPR008925">
    <property type="entry name" value="aa_tRNA-synth_I_cd-bd_sf"/>
</dbReference>
<dbReference type="InterPro" id="IPR004527">
    <property type="entry name" value="Glu-tRNA-ligase_bac/mito"/>
</dbReference>
<dbReference type="InterPro" id="IPR000924">
    <property type="entry name" value="Glu/Gln-tRNA-synth"/>
</dbReference>
<dbReference type="InterPro" id="IPR020058">
    <property type="entry name" value="Glu/Gln-tRNA-synth_Ib_cat-dom"/>
</dbReference>
<dbReference type="InterPro" id="IPR049940">
    <property type="entry name" value="GluQ/Sye"/>
</dbReference>
<dbReference type="InterPro" id="IPR033910">
    <property type="entry name" value="GluRS_core"/>
</dbReference>
<dbReference type="InterPro" id="IPR014729">
    <property type="entry name" value="Rossmann-like_a/b/a_fold"/>
</dbReference>
<dbReference type="NCBIfam" id="TIGR00464">
    <property type="entry name" value="gltX_bact"/>
    <property type="match status" value="1"/>
</dbReference>
<dbReference type="PANTHER" id="PTHR43311">
    <property type="entry name" value="GLUTAMATE--TRNA LIGASE"/>
    <property type="match status" value="1"/>
</dbReference>
<dbReference type="PANTHER" id="PTHR43311:SF2">
    <property type="entry name" value="GLUTAMATE--TRNA LIGASE, MITOCHONDRIAL-RELATED"/>
    <property type="match status" value="1"/>
</dbReference>
<dbReference type="Pfam" id="PF19269">
    <property type="entry name" value="Anticodon_2"/>
    <property type="match status" value="1"/>
</dbReference>
<dbReference type="Pfam" id="PF00749">
    <property type="entry name" value="tRNA-synt_1c"/>
    <property type="match status" value="1"/>
</dbReference>
<dbReference type="PRINTS" id="PR00987">
    <property type="entry name" value="TRNASYNTHGLU"/>
</dbReference>
<dbReference type="SUPFAM" id="SSF48163">
    <property type="entry name" value="An anticodon-binding domain of class I aminoacyl-tRNA synthetases"/>
    <property type="match status" value="1"/>
</dbReference>
<dbReference type="SUPFAM" id="SSF52374">
    <property type="entry name" value="Nucleotidylyl transferase"/>
    <property type="match status" value="1"/>
</dbReference>
<dbReference type="PROSITE" id="PS00178">
    <property type="entry name" value="AA_TRNA_LIGASE_I"/>
    <property type="match status" value="1"/>
</dbReference>
<organism>
    <name type="scientific">Oenococcus oeni (strain ATCC BAA-331 / PSU-1)</name>
    <dbReference type="NCBI Taxonomy" id="203123"/>
    <lineage>
        <taxon>Bacteria</taxon>
        <taxon>Bacillati</taxon>
        <taxon>Bacillota</taxon>
        <taxon>Bacilli</taxon>
        <taxon>Lactobacillales</taxon>
        <taxon>Lactobacillaceae</taxon>
        <taxon>Oenococcus</taxon>
    </lineage>
</organism>
<proteinExistence type="inferred from homology"/>
<name>SYE_OENOB</name>
<comment type="function">
    <text evidence="1">Catalyzes the attachment of glutamate to tRNA(Glu) in a two-step reaction: glutamate is first activated by ATP to form Glu-AMP and then transferred to the acceptor end of tRNA(Glu).</text>
</comment>
<comment type="catalytic activity">
    <reaction evidence="1">
        <text>tRNA(Glu) + L-glutamate + ATP = L-glutamyl-tRNA(Glu) + AMP + diphosphate</text>
        <dbReference type="Rhea" id="RHEA:23540"/>
        <dbReference type="Rhea" id="RHEA-COMP:9663"/>
        <dbReference type="Rhea" id="RHEA-COMP:9680"/>
        <dbReference type="ChEBI" id="CHEBI:29985"/>
        <dbReference type="ChEBI" id="CHEBI:30616"/>
        <dbReference type="ChEBI" id="CHEBI:33019"/>
        <dbReference type="ChEBI" id="CHEBI:78442"/>
        <dbReference type="ChEBI" id="CHEBI:78520"/>
        <dbReference type="ChEBI" id="CHEBI:456215"/>
        <dbReference type="EC" id="6.1.1.17"/>
    </reaction>
</comment>
<comment type="subunit">
    <text evidence="1">Monomer.</text>
</comment>
<comment type="subcellular location">
    <subcellularLocation>
        <location evidence="1">Cytoplasm</location>
    </subcellularLocation>
</comment>
<comment type="similarity">
    <text evidence="1">Belongs to the class-I aminoacyl-tRNA synthetase family. Glutamate--tRNA ligase type 1 subfamily.</text>
</comment>
<reference key="1">
    <citation type="journal article" date="2006" name="Proc. Natl. Acad. Sci. U.S.A.">
        <title>Comparative genomics of the lactic acid bacteria.</title>
        <authorList>
            <person name="Makarova K.S."/>
            <person name="Slesarev A."/>
            <person name="Wolf Y.I."/>
            <person name="Sorokin A."/>
            <person name="Mirkin B."/>
            <person name="Koonin E.V."/>
            <person name="Pavlov A."/>
            <person name="Pavlova N."/>
            <person name="Karamychev V."/>
            <person name="Polouchine N."/>
            <person name="Shakhova V."/>
            <person name="Grigoriev I."/>
            <person name="Lou Y."/>
            <person name="Rohksar D."/>
            <person name="Lucas S."/>
            <person name="Huang K."/>
            <person name="Goodstein D.M."/>
            <person name="Hawkins T."/>
            <person name="Plengvidhya V."/>
            <person name="Welker D."/>
            <person name="Hughes J."/>
            <person name="Goh Y."/>
            <person name="Benson A."/>
            <person name="Baldwin K."/>
            <person name="Lee J.-H."/>
            <person name="Diaz-Muniz I."/>
            <person name="Dosti B."/>
            <person name="Smeianov V."/>
            <person name="Wechter W."/>
            <person name="Barabote R."/>
            <person name="Lorca G."/>
            <person name="Altermann E."/>
            <person name="Barrangou R."/>
            <person name="Ganesan B."/>
            <person name="Xie Y."/>
            <person name="Rawsthorne H."/>
            <person name="Tamir D."/>
            <person name="Parker C."/>
            <person name="Breidt F."/>
            <person name="Broadbent J.R."/>
            <person name="Hutkins R."/>
            <person name="O'Sullivan D."/>
            <person name="Steele J."/>
            <person name="Unlu G."/>
            <person name="Saier M.H. Jr."/>
            <person name="Klaenhammer T."/>
            <person name="Richardson P."/>
            <person name="Kozyavkin S."/>
            <person name="Weimer B.C."/>
            <person name="Mills D.A."/>
        </authorList>
    </citation>
    <scope>NUCLEOTIDE SEQUENCE [LARGE SCALE GENOMIC DNA]</scope>
    <source>
        <strain>ATCC BAA-331 / PSU-1</strain>
    </source>
</reference>
<sequence>MTEKIRVRYAPSPTGHLHIGNARTAIFNWLFARHYNGQFIIRIEDTDLARNVKDGEKSQLDNLQWLGIDWDEGPDKANSKYAPYRQTERAAQGVYQKYIDELLASGKAYKSYKTEATLKEEREAQAQAHQAPHYVYEYAGMTKEQIKDAQAKDEAAGLKSVVRFRVPENHDYQWQDLVKGEVKINSKEIGGDWVIQKADGMPTYNFAVVIDDHLMEITHVLRGDDHVSNTPKQLMVYEAFGWKAPAFGHMALIIKAETGKKLSKRDEDTLQFIEQYRELGYLPEAMFNFIGLLGWSPVGENEIFTREQFKEMFDENRFTKANAKFDAKKLAWVNNQWMRSEKEKVMPQLIHELVKAGLINDQQAKNDADHLAKIIEIAGVDGIKATSEIAPLAEYPFFKLHDISKEDRQSWLETDDGQKVAAAFTEKIKALAEDEFKAGHILQIIRDLQHDLQIKGRPLWNPIRLITTHEVQGPNLPEILAVMGKDWTIKNIQLTVAV</sequence>
<evidence type="ECO:0000255" key="1">
    <source>
        <dbReference type="HAMAP-Rule" id="MF_00022"/>
    </source>
</evidence>
<keyword id="KW-0030">Aminoacyl-tRNA synthetase</keyword>
<keyword id="KW-0067">ATP-binding</keyword>
<keyword id="KW-0963">Cytoplasm</keyword>
<keyword id="KW-0436">Ligase</keyword>
<keyword id="KW-0547">Nucleotide-binding</keyword>
<keyword id="KW-0648">Protein biosynthesis</keyword>
<keyword id="KW-1185">Reference proteome</keyword>
<accession>Q04GX5</accession>
<feature type="chain" id="PRO_1000057197" description="Glutamate--tRNA ligase">
    <location>
        <begin position="1"/>
        <end position="498"/>
    </location>
</feature>
<feature type="short sequence motif" description="'HIGH' region" evidence="1">
    <location>
        <begin position="11"/>
        <end position="21"/>
    </location>
</feature>
<feature type="short sequence motif" description="'KMSKS' region" evidence="1">
    <location>
        <begin position="261"/>
        <end position="265"/>
    </location>
</feature>
<feature type="binding site" evidence="1">
    <location>
        <position position="264"/>
    </location>
    <ligand>
        <name>ATP</name>
        <dbReference type="ChEBI" id="CHEBI:30616"/>
    </ligand>
</feature>
<gene>
    <name evidence="1" type="primary">gltX</name>
    <name type="ordered locus">OEOE_0321</name>
</gene>